<accession>Q3BWK3</accession>
<gene>
    <name evidence="1" type="primary">recR</name>
    <name type="ordered locus">XCV1129</name>
</gene>
<proteinExistence type="inferred from homology"/>
<sequence length="197" mass="21485">MSTLLEQLIEAFRVLPGVGQKSAQRMAYHVLEREREGGRRLAAALGNAVEKVGHCVQCRDFTESEICTICASSSRDRQQLCVVESPADRLAIEHATGYRGLYFILQGRLSPLDGIGPRELGLDRLGERLAAGEVTEMIIATNATVEGEATAHYLAQLARQHAVRPSRLAQGMPLGGELEYVDRGTLSHAFGTRSEVL</sequence>
<organism>
    <name type="scientific">Xanthomonas euvesicatoria pv. vesicatoria (strain 85-10)</name>
    <name type="common">Xanthomonas campestris pv. vesicatoria</name>
    <dbReference type="NCBI Taxonomy" id="316273"/>
    <lineage>
        <taxon>Bacteria</taxon>
        <taxon>Pseudomonadati</taxon>
        <taxon>Pseudomonadota</taxon>
        <taxon>Gammaproteobacteria</taxon>
        <taxon>Lysobacterales</taxon>
        <taxon>Lysobacteraceae</taxon>
        <taxon>Xanthomonas</taxon>
    </lineage>
</organism>
<dbReference type="EMBL" id="AM039952">
    <property type="protein sequence ID" value="CAJ22760.1"/>
    <property type="molecule type" value="Genomic_DNA"/>
</dbReference>
<dbReference type="RefSeq" id="WP_011346623.1">
    <property type="nucleotide sequence ID" value="NZ_CP017190.1"/>
</dbReference>
<dbReference type="SMR" id="Q3BWK3"/>
<dbReference type="STRING" id="456327.BJD11_17010"/>
<dbReference type="KEGG" id="xcv:XCV1129"/>
<dbReference type="eggNOG" id="COG0353">
    <property type="taxonomic scope" value="Bacteria"/>
</dbReference>
<dbReference type="HOGENOM" id="CLU_060739_1_2_6"/>
<dbReference type="Proteomes" id="UP000007069">
    <property type="component" value="Chromosome"/>
</dbReference>
<dbReference type="GO" id="GO:0003677">
    <property type="term" value="F:DNA binding"/>
    <property type="evidence" value="ECO:0007669"/>
    <property type="project" value="UniProtKB-UniRule"/>
</dbReference>
<dbReference type="GO" id="GO:0008270">
    <property type="term" value="F:zinc ion binding"/>
    <property type="evidence" value="ECO:0007669"/>
    <property type="project" value="UniProtKB-KW"/>
</dbReference>
<dbReference type="GO" id="GO:0006310">
    <property type="term" value="P:DNA recombination"/>
    <property type="evidence" value="ECO:0007669"/>
    <property type="project" value="UniProtKB-UniRule"/>
</dbReference>
<dbReference type="GO" id="GO:0006281">
    <property type="term" value="P:DNA repair"/>
    <property type="evidence" value="ECO:0007669"/>
    <property type="project" value="UniProtKB-UniRule"/>
</dbReference>
<dbReference type="CDD" id="cd01025">
    <property type="entry name" value="TOPRIM_recR"/>
    <property type="match status" value="1"/>
</dbReference>
<dbReference type="Gene3D" id="3.40.1360.10">
    <property type="match status" value="1"/>
</dbReference>
<dbReference type="Gene3D" id="6.10.250.240">
    <property type="match status" value="1"/>
</dbReference>
<dbReference type="Gene3D" id="1.10.8.420">
    <property type="entry name" value="RecR Domain 1"/>
    <property type="match status" value="1"/>
</dbReference>
<dbReference type="HAMAP" id="MF_00017">
    <property type="entry name" value="RecR"/>
    <property type="match status" value="1"/>
</dbReference>
<dbReference type="InterPro" id="IPR000093">
    <property type="entry name" value="DNA_Rcmb_RecR"/>
</dbReference>
<dbReference type="InterPro" id="IPR023627">
    <property type="entry name" value="Rcmb_RecR"/>
</dbReference>
<dbReference type="InterPro" id="IPR015967">
    <property type="entry name" value="Rcmb_RecR_Znf"/>
</dbReference>
<dbReference type="InterPro" id="IPR006171">
    <property type="entry name" value="TOPRIM_dom"/>
</dbReference>
<dbReference type="InterPro" id="IPR034137">
    <property type="entry name" value="TOPRIM_RecR"/>
</dbReference>
<dbReference type="NCBIfam" id="TIGR00615">
    <property type="entry name" value="recR"/>
    <property type="match status" value="1"/>
</dbReference>
<dbReference type="PANTHER" id="PTHR30446">
    <property type="entry name" value="RECOMBINATION PROTEIN RECR"/>
    <property type="match status" value="1"/>
</dbReference>
<dbReference type="PANTHER" id="PTHR30446:SF0">
    <property type="entry name" value="RECOMBINATION PROTEIN RECR"/>
    <property type="match status" value="1"/>
</dbReference>
<dbReference type="Pfam" id="PF21175">
    <property type="entry name" value="RecR_C"/>
    <property type="match status" value="1"/>
</dbReference>
<dbReference type="Pfam" id="PF21176">
    <property type="entry name" value="RecR_HhH"/>
    <property type="match status" value="1"/>
</dbReference>
<dbReference type="Pfam" id="PF02132">
    <property type="entry name" value="RecR_ZnF"/>
    <property type="match status" value="1"/>
</dbReference>
<dbReference type="Pfam" id="PF13662">
    <property type="entry name" value="Toprim_4"/>
    <property type="match status" value="1"/>
</dbReference>
<dbReference type="SMART" id="SM00493">
    <property type="entry name" value="TOPRIM"/>
    <property type="match status" value="1"/>
</dbReference>
<dbReference type="SUPFAM" id="SSF111304">
    <property type="entry name" value="Recombination protein RecR"/>
    <property type="match status" value="1"/>
</dbReference>
<dbReference type="PROSITE" id="PS01300">
    <property type="entry name" value="RECR"/>
    <property type="match status" value="1"/>
</dbReference>
<dbReference type="PROSITE" id="PS50880">
    <property type="entry name" value="TOPRIM"/>
    <property type="match status" value="1"/>
</dbReference>
<protein>
    <recommendedName>
        <fullName evidence="1">Recombination protein RecR</fullName>
    </recommendedName>
</protein>
<name>RECR_XANE5</name>
<reference key="1">
    <citation type="journal article" date="2005" name="J. Bacteriol.">
        <title>Insights into genome plasticity and pathogenicity of the plant pathogenic Bacterium Xanthomonas campestris pv. vesicatoria revealed by the complete genome sequence.</title>
        <authorList>
            <person name="Thieme F."/>
            <person name="Koebnik R."/>
            <person name="Bekel T."/>
            <person name="Berger C."/>
            <person name="Boch J."/>
            <person name="Buettner D."/>
            <person name="Caldana C."/>
            <person name="Gaigalat L."/>
            <person name="Goesmann A."/>
            <person name="Kay S."/>
            <person name="Kirchner O."/>
            <person name="Lanz C."/>
            <person name="Linke B."/>
            <person name="McHardy A.C."/>
            <person name="Meyer F."/>
            <person name="Mittenhuber G."/>
            <person name="Nies D.H."/>
            <person name="Niesbach-Kloesgen U."/>
            <person name="Patschkowski T."/>
            <person name="Rueckert C."/>
            <person name="Rupp O."/>
            <person name="Schneiker S."/>
            <person name="Schuster S.C."/>
            <person name="Vorhoelter F.J."/>
            <person name="Weber E."/>
            <person name="Puehler A."/>
            <person name="Bonas U."/>
            <person name="Bartels D."/>
            <person name="Kaiser O."/>
        </authorList>
    </citation>
    <scope>NUCLEOTIDE SEQUENCE [LARGE SCALE GENOMIC DNA]</scope>
    <source>
        <strain>85-10</strain>
    </source>
</reference>
<feature type="chain" id="PRO_0000322972" description="Recombination protein RecR">
    <location>
        <begin position="1"/>
        <end position="197"/>
    </location>
</feature>
<feature type="domain" description="Toprim" evidence="1">
    <location>
        <begin position="78"/>
        <end position="173"/>
    </location>
</feature>
<feature type="zinc finger region" description="C4-type" evidence="1">
    <location>
        <begin position="55"/>
        <end position="70"/>
    </location>
</feature>
<evidence type="ECO:0000255" key="1">
    <source>
        <dbReference type="HAMAP-Rule" id="MF_00017"/>
    </source>
</evidence>
<keyword id="KW-0227">DNA damage</keyword>
<keyword id="KW-0233">DNA recombination</keyword>
<keyword id="KW-0234">DNA repair</keyword>
<keyword id="KW-0479">Metal-binding</keyword>
<keyword id="KW-0862">Zinc</keyword>
<keyword id="KW-0863">Zinc-finger</keyword>
<comment type="function">
    <text evidence="1">May play a role in DNA repair. It seems to be involved in an RecBC-independent recombinational process of DNA repair. It may act with RecF and RecO.</text>
</comment>
<comment type="similarity">
    <text evidence="1">Belongs to the RecR family.</text>
</comment>